<keyword id="KW-0007">Acetylation</keyword>
<keyword id="KW-0030">Aminoacyl-tRNA synthetase</keyword>
<keyword id="KW-0067">ATP-binding</keyword>
<keyword id="KW-0963">Cytoplasm</keyword>
<keyword id="KW-0436">Ligase</keyword>
<keyword id="KW-0479">Metal-binding</keyword>
<keyword id="KW-0547">Nucleotide-binding</keyword>
<keyword id="KW-0648">Protein biosynthesis</keyword>
<keyword id="KW-0694">RNA-binding</keyword>
<keyword id="KW-0820">tRNA-binding</keyword>
<keyword id="KW-0862">Zinc</keyword>
<accession>Q0TEI3</accession>
<organism>
    <name type="scientific">Escherichia coli O6:K15:H31 (strain 536 / UPEC)</name>
    <dbReference type="NCBI Taxonomy" id="362663"/>
    <lineage>
        <taxon>Bacteria</taxon>
        <taxon>Pseudomonadati</taxon>
        <taxon>Pseudomonadota</taxon>
        <taxon>Gammaproteobacteria</taxon>
        <taxon>Enterobacterales</taxon>
        <taxon>Enterobacteriaceae</taxon>
        <taxon>Escherichia</taxon>
    </lineage>
</organism>
<gene>
    <name evidence="1" type="primary">alaS</name>
    <name type="ordered locus">ECP_2657</name>
</gene>
<reference key="1">
    <citation type="journal article" date="2006" name="Mol. Microbiol.">
        <title>Role of pathogenicity island-associated integrases in the genome plasticity of uropathogenic Escherichia coli strain 536.</title>
        <authorList>
            <person name="Hochhut B."/>
            <person name="Wilde C."/>
            <person name="Balling G."/>
            <person name="Middendorf B."/>
            <person name="Dobrindt U."/>
            <person name="Brzuszkiewicz E."/>
            <person name="Gottschalk G."/>
            <person name="Carniel E."/>
            <person name="Hacker J."/>
        </authorList>
    </citation>
    <scope>NUCLEOTIDE SEQUENCE [LARGE SCALE GENOMIC DNA]</scope>
    <source>
        <strain>536 / UPEC</strain>
    </source>
</reference>
<sequence>MSKSTAEIRQAFLDFFHSKGHQVVASSSLVPHNDPTLLFTNAGMNQFKDVFLGLDKRNYSRATTSQRCVRAGGKHNDLENVGYTARHHTFFEMLGNFSFGDYFKHDAIQFAWELLTSEKWFALPKERLWVTVYESDDEAYEIWEKEVGIPRERIIRIGDNKGAPYASDNFWQMGDTGPCGPCTEIFYDHGDHIWGGPPGSPEEDGDRYIEIWNIVFMQFNRQADGTMEPLPKPSVDTGMGLERIAAVLQHVNSNYDIDLFRTLIQAVAKVTGATDLSNKSLRVIADHIRSCAFLIADGVMPSNENRGYVLRRIIRRAVRHGNMLGAKETFFYKLVGPLIDVMGSAGEDLKRQQAQVEQVLKTEEEQFARTLERGLALLDEELAKLSGDTLDGETAFRLYDTYGFPVDLTADVCRERNIKVDEAGFEAAMEEQRRRAREASGFGADYNAMIRVDSASEFKGYDHLELNGKVTALFVDGKAVDAINAGQEAVVVLDQTPFYAESGGQVGDKGELKGANFSFAVEDTQKYGQAIGHIGKLAAGSLKVGDAVQADVDEARRARIRLNHSATHLMHAALRQVLGTHVSQKGSLVNDKVLRFDFSHNEAMKPEEIRAVEDLVNAQIRRNLPIETNIMDLEAAKAKGAMALFGEKYDERVRVLSMGDFSTELCGGTHASRTGDIGLFRIISESGTAAGVRRIEAVTGEGAIATVHADSERLSEVAHLLKGDSNNLADKVRSVLERTRQLEKELQQLKEQAAAQESANLSSKAIDVNGVKLLVSELSGVEPKMLRTMVDDLKNQLGSTIIVLATVAEGKVSLIAGVSKDVTDRVKAGELIGMVAQQVGGKGGGRPDMAQAGGTDAAALPAALASVKGWVSAKLQ</sequence>
<protein>
    <recommendedName>
        <fullName evidence="1">Alanine--tRNA ligase</fullName>
        <ecNumber evidence="1">6.1.1.7</ecNumber>
    </recommendedName>
    <alternativeName>
        <fullName evidence="1">Alanyl-tRNA synthetase</fullName>
        <shortName evidence="1">AlaRS</shortName>
    </alternativeName>
</protein>
<proteinExistence type="inferred from homology"/>
<feature type="chain" id="PRO_0000347602" description="Alanine--tRNA ligase">
    <location>
        <begin position="1"/>
        <end position="876"/>
    </location>
</feature>
<feature type="binding site" evidence="1">
    <location>
        <position position="564"/>
    </location>
    <ligand>
        <name>Zn(2+)</name>
        <dbReference type="ChEBI" id="CHEBI:29105"/>
    </ligand>
</feature>
<feature type="binding site" evidence="1">
    <location>
        <position position="568"/>
    </location>
    <ligand>
        <name>Zn(2+)</name>
        <dbReference type="ChEBI" id="CHEBI:29105"/>
    </ligand>
</feature>
<feature type="binding site" evidence="1">
    <location>
        <position position="666"/>
    </location>
    <ligand>
        <name>Zn(2+)</name>
        <dbReference type="ChEBI" id="CHEBI:29105"/>
    </ligand>
</feature>
<feature type="binding site" evidence="1">
    <location>
        <position position="670"/>
    </location>
    <ligand>
        <name>Zn(2+)</name>
        <dbReference type="ChEBI" id="CHEBI:29105"/>
    </ligand>
</feature>
<feature type="modified residue" description="N6-acetyllysine" evidence="1">
    <location>
        <position position="74"/>
    </location>
</feature>
<dbReference type="EC" id="6.1.1.7" evidence="1"/>
<dbReference type="EMBL" id="CP000247">
    <property type="protein sequence ID" value="ABG70646.1"/>
    <property type="molecule type" value="Genomic_DNA"/>
</dbReference>
<dbReference type="RefSeq" id="WP_000047172.1">
    <property type="nucleotide sequence ID" value="NC_008253.1"/>
</dbReference>
<dbReference type="SMR" id="Q0TEI3"/>
<dbReference type="KEGG" id="ecp:ECP_2657"/>
<dbReference type="HOGENOM" id="CLU_004485_1_1_6"/>
<dbReference type="Proteomes" id="UP000009182">
    <property type="component" value="Chromosome"/>
</dbReference>
<dbReference type="GO" id="GO:0005829">
    <property type="term" value="C:cytosol"/>
    <property type="evidence" value="ECO:0007669"/>
    <property type="project" value="TreeGrafter"/>
</dbReference>
<dbReference type="GO" id="GO:0004813">
    <property type="term" value="F:alanine-tRNA ligase activity"/>
    <property type="evidence" value="ECO:0007669"/>
    <property type="project" value="UniProtKB-UniRule"/>
</dbReference>
<dbReference type="GO" id="GO:0002161">
    <property type="term" value="F:aminoacyl-tRNA deacylase activity"/>
    <property type="evidence" value="ECO:0007669"/>
    <property type="project" value="TreeGrafter"/>
</dbReference>
<dbReference type="GO" id="GO:0005524">
    <property type="term" value="F:ATP binding"/>
    <property type="evidence" value="ECO:0007669"/>
    <property type="project" value="UniProtKB-UniRule"/>
</dbReference>
<dbReference type="GO" id="GO:0000049">
    <property type="term" value="F:tRNA binding"/>
    <property type="evidence" value="ECO:0007669"/>
    <property type="project" value="UniProtKB-KW"/>
</dbReference>
<dbReference type="GO" id="GO:0008270">
    <property type="term" value="F:zinc ion binding"/>
    <property type="evidence" value="ECO:0007669"/>
    <property type="project" value="UniProtKB-UniRule"/>
</dbReference>
<dbReference type="GO" id="GO:0006419">
    <property type="term" value="P:alanyl-tRNA aminoacylation"/>
    <property type="evidence" value="ECO:0007669"/>
    <property type="project" value="UniProtKB-UniRule"/>
</dbReference>
<dbReference type="GO" id="GO:0045892">
    <property type="term" value="P:negative regulation of DNA-templated transcription"/>
    <property type="evidence" value="ECO:0007669"/>
    <property type="project" value="TreeGrafter"/>
</dbReference>
<dbReference type="CDD" id="cd00673">
    <property type="entry name" value="AlaRS_core"/>
    <property type="match status" value="1"/>
</dbReference>
<dbReference type="FunFam" id="2.40.30.130:FF:000001">
    <property type="entry name" value="Alanine--tRNA ligase"/>
    <property type="match status" value="1"/>
</dbReference>
<dbReference type="FunFam" id="3.10.310.40:FF:000001">
    <property type="entry name" value="Alanine--tRNA ligase"/>
    <property type="match status" value="1"/>
</dbReference>
<dbReference type="FunFam" id="3.30.54.20:FF:000001">
    <property type="entry name" value="Alanine--tRNA ligase"/>
    <property type="match status" value="1"/>
</dbReference>
<dbReference type="FunFam" id="3.30.930.10:FF:000004">
    <property type="entry name" value="Alanine--tRNA ligase"/>
    <property type="match status" value="1"/>
</dbReference>
<dbReference type="FunFam" id="3.30.980.10:FF:000004">
    <property type="entry name" value="Alanine--tRNA ligase, cytoplasmic"/>
    <property type="match status" value="1"/>
</dbReference>
<dbReference type="Gene3D" id="2.40.30.130">
    <property type="match status" value="1"/>
</dbReference>
<dbReference type="Gene3D" id="3.10.310.40">
    <property type="match status" value="1"/>
</dbReference>
<dbReference type="Gene3D" id="3.30.54.20">
    <property type="match status" value="1"/>
</dbReference>
<dbReference type="Gene3D" id="6.10.250.550">
    <property type="match status" value="1"/>
</dbReference>
<dbReference type="Gene3D" id="3.30.930.10">
    <property type="entry name" value="Bira Bifunctional Protein, Domain 2"/>
    <property type="match status" value="1"/>
</dbReference>
<dbReference type="Gene3D" id="3.30.980.10">
    <property type="entry name" value="Threonyl-trna Synthetase, Chain A, domain 2"/>
    <property type="match status" value="1"/>
</dbReference>
<dbReference type="HAMAP" id="MF_00036_B">
    <property type="entry name" value="Ala_tRNA_synth_B"/>
    <property type="match status" value="1"/>
</dbReference>
<dbReference type="InterPro" id="IPR045864">
    <property type="entry name" value="aa-tRNA-synth_II/BPL/LPL"/>
</dbReference>
<dbReference type="InterPro" id="IPR002318">
    <property type="entry name" value="Ala-tRNA-lgiase_IIc"/>
</dbReference>
<dbReference type="InterPro" id="IPR018162">
    <property type="entry name" value="Ala-tRNA-ligase_IIc_anticod-bd"/>
</dbReference>
<dbReference type="InterPro" id="IPR018165">
    <property type="entry name" value="Ala-tRNA-synth_IIc_core"/>
</dbReference>
<dbReference type="InterPro" id="IPR018164">
    <property type="entry name" value="Ala-tRNA-synth_IIc_N"/>
</dbReference>
<dbReference type="InterPro" id="IPR050058">
    <property type="entry name" value="Ala-tRNA_ligase"/>
</dbReference>
<dbReference type="InterPro" id="IPR023033">
    <property type="entry name" value="Ala_tRNA_ligase_euk/bac"/>
</dbReference>
<dbReference type="InterPro" id="IPR003156">
    <property type="entry name" value="DHHA1_dom"/>
</dbReference>
<dbReference type="InterPro" id="IPR018163">
    <property type="entry name" value="Thr/Ala-tRNA-synth_IIc_edit"/>
</dbReference>
<dbReference type="InterPro" id="IPR009000">
    <property type="entry name" value="Transl_B-barrel_sf"/>
</dbReference>
<dbReference type="InterPro" id="IPR012947">
    <property type="entry name" value="tRNA_SAD"/>
</dbReference>
<dbReference type="NCBIfam" id="TIGR00344">
    <property type="entry name" value="alaS"/>
    <property type="match status" value="1"/>
</dbReference>
<dbReference type="PANTHER" id="PTHR11777:SF9">
    <property type="entry name" value="ALANINE--TRNA LIGASE, CYTOPLASMIC"/>
    <property type="match status" value="1"/>
</dbReference>
<dbReference type="PANTHER" id="PTHR11777">
    <property type="entry name" value="ALANYL-TRNA SYNTHETASE"/>
    <property type="match status" value="1"/>
</dbReference>
<dbReference type="Pfam" id="PF02272">
    <property type="entry name" value="DHHA1"/>
    <property type="match status" value="1"/>
</dbReference>
<dbReference type="Pfam" id="PF01411">
    <property type="entry name" value="tRNA-synt_2c"/>
    <property type="match status" value="1"/>
</dbReference>
<dbReference type="Pfam" id="PF07973">
    <property type="entry name" value="tRNA_SAD"/>
    <property type="match status" value="1"/>
</dbReference>
<dbReference type="PRINTS" id="PR00980">
    <property type="entry name" value="TRNASYNTHALA"/>
</dbReference>
<dbReference type="SMART" id="SM00863">
    <property type="entry name" value="tRNA_SAD"/>
    <property type="match status" value="1"/>
</dbReference>
<dbReference type="SUPFAM" id="SSF55681">
    <property type="entry name" value="Class II aaRS and biotin synthetases"/>
    <property type="match status" value="1"/>
</dbReference>
<dbReference type="SUPFAM" id="SSF101353">
    <property type="entry name" value="Putative anticodon-binding domain of alanyl-tRNA synthetase (AlaRS)"/>
    <property type="match status" value="1"/>
</dbReference>
<dbReference type="SUPFAM" id="SSF55186">
    <property type="entry name" value="ThrRS/AlaRS common domain"/>
    <property type="match status" value="1"/>
</dbReference>
<dbReference type="SUPFAM" id="SSF50447">
    <property type="entry name" value="Translation proteins"/>
    <property type="match status" value="1"/>
</dbReference>
<dbReference type="PROSITE" id="PS50860">
    <property type="entry name" value="AA_TRNA_LIGASE_II_ALA"/>
    <property type="match status" value="1"/>
</dbReference>
<name>SYA_ECOL5</name>
<evidence type="ECO:0000255" key="1">
    <source>
        <dbReference type="HAMAP-Rule" id="MF_00036"/>
    </source>
</evidence>
<comment type="function">
    <text evidence="1">Catalyzes the attachment of alanine to tRNA(Ala) in a two-step reaction: alanine is first activated by ATP to form Ala-AMP and then transferred to the acceptor end of tRNA(Ala). Also edits incorrectly charged Ser-tRNA(Ala) and Gly-tRNA(Ala) via its editing domain.</text>
</comment>
<comment type="catalytic activity">
    <reaction evidence="1">
        <text>tRNA(Ala) + L-alanine + ATP = L-alanyl-tRNA(Ala) + AMP + diphosphate</text>
        <dbReference type="Rhea" id="RHEA:12540"/>
        <dbReference type="Rhea" id="RHEA-COMP:9657"/>
        <dbReference type="Rhea" id="RHEA-COMP:9923"/>
        <dbReference type="ChEBI" id="CHEBI:30616"/>
        <dbReference type="ChEBI" id="CHEBI:33019"/>
        <dbReference type="ChEBI" id="CHEBI:57972"/>
        <dbReference type="ChEBI" id="CHEBI:78442"/>
        <dbReference type="ChEBI" id="CHEBI:78497"/>
        <dbReference type="ChEBI" id="CHEBI:456215"/>
        <dbReference type="EC" id="6.1.1.7"/>
    </reaction>
</comment>
<comment type="cofactor">
    <cofactor evidence="1">
        <name>Zn(2+)</name>
        <dbReference type="ChEBI" id="CHEBI:29105"/>
    </cofactor>
    <text evidence="1">Binds 1 zinc ion per subunit.</text>
</comment>
<comment type="subunit">
    <text evidence="1">Homotetramer.</text>
</comment>
<comment type="subcellular location">
    <subcellularLocation>
        <location evidence="1">Cytoplasm</location>
    </subcellularLocation>
</comment>
<comment type="domain">
    <text evidence="1">Consists of three domains; the N-terminal catalytic domain, the editing domain and the C-terminal C-Ala domain. The editing domain removes incorrectly charged amino acids, while the C-Ala domain, along with tRNA(Ala), serves as a bridge to cooperatively bring together the editing and aminoacylation centers thus stimulating deacylation of misacylated tRNAs.</text>
</comment>
<comment type="similarity">
    <text evidence="1">Belongs to the class-II aminoacyl-tRNA synthetase family.</text>
</comment>